<accession>P43863</accession>
<sequence>MIKKIAVLTSGGDAPGMNAAIRGVVRSALAEGLEVFGIYDGYQGLYNNKIKQLNRYSVSDVINRGGTFLGSARFPEFKDPNIRAKCAEILRSHGIDALVVIGGDGSYMGAKLLTEEHSFPCVGLPGTIDNDVAGTDYTIGYQTALQTAVDAIDRLRDTSSSHQRISIVEIMGRHCSDLTISAGIAGGCEYIVASEIEFNREELIQQIERSIIRGKRHAIIAITELLTDVHSLAKEIEARVGHETRATVLGHIQRGGSPCAFDRILASRMGAYAVDLLLQGKGGYCVGIQNEQLVHHDIIDAINNMQRVFKADWLKVAKRLE</sequence>
<keyword id="KW-0021">Allosteric enzyme</keyword>
<keyword id="KW-0067">ATP-binding</keyword>
<keyword id="KW-0963">Cytoplasm</keyword>
<keyword id="KW-0324">Glycolysis</keyword>
<keyword id="KW-0418">Kinase</keyword>
<keyword id="KW-0460">Magnesium</keyword>
<keyword id="KW-0479">Metal-binding</keyword>
<keyword id="KW-0547">Nucleotide-binding</keyword>
<keyword id="KW-1185">Reference proteome</keyword>
<keyword id="KW-0808">Transferase</keyword>
<feature type="chain" id="PRO_0000111956" description="ATP-dependent 6-phosphofructokinase">
    <location>
        <begin position="1"/>
        <end position="321"/>
    </location>
</feature>
<feature type="active site" description="Proton acceptor" evidence="1">
    <location>
        <position position="129"/>
    </location>
</feature>
<feature type="binding site" evidence="1">
    <location>
        <position position="12"/>
    </location>
    <ligand>
        <name>ATP</name>
        <dbReference type="ChEBI" id="CHEBI:30616"/>
    </ligand>
</feature>
<feature type="binding site" evidence="1">
    <location>
        <begin position="22"/>
        <end position="26"/>
    </location>
    <ligand>
        <name>ADP</name>
        <dbReference type="ChEBI" id="CHEBI:456216"/>
        <note>allosteric activator; ligand shared between dimeric partners</note>
    </ligand>
</feature>
<feature type="binding site" evidence="1">
    <location>
        <begin position="55"/>
        <end position="60"/>
    </location>
    <ligand>
        <name>ADP</name>
        <dbReference type="ChEBI" id="CHEBI:456216"/>
        <note>allosteric activator; ligand shared between dimeric partners</note>
    </ligand>
</feature>
<feature type="binding site" evidence="1">
    <location>
        <begin position="73"/>
        <end position="74"/>
    </location>
    <ligand>
        <name>ATP</name>
        <dbReference type="ChEBI" id="CHEBI:30616"/>
    </ligand>
</feature>
<feature type="binding site" evidence="1">
    <location>
        <begin position="103"/>
        <end position="106"/>
    </location>
    <ligand>
        <name>ATP</name>
        <dbReference type="ChEBI" id="CHEBI:30616"/>
    </ligand>
</feature>
<feature type="binding site" evidence="1">
    <location>
        <position position="104"/>
    </location>
    <ligand>
        <name>Mg(2+)</name>
        <dbReference type="ChEBI" id="CHEBI:18420"/>
        <note>catalytic</note>
    </ligand>
</feature>
<feature type="binding site" description="in other chain" evidence="1">
    <location>
        <begin position="127"/>
        <end position="129"/>
    </location>
    <ligand>
        <name>substrate</name>
        <note>ligand shared between dimeric partners</note>
    </ligand>
</feature>
<feature type="binding site" description="in other chain" evidence="1">
    <location>
        <position position="156"/>
    </location>
    <ligand>
        <name>ADP</name>
        <dbReference type="ChEBI" id="CHEBI:456216"/>
        <note>allosteric activator; ligand shared between dimeric partners</note>
    </ligand>
</feature>
<feature type="binding site" evidence="1">
    <location>
        <position position="164"/>
    </location>
    <ligand>
        <name>substrate</name>
        <note>ligand shared between dimeric partners</note>
    </ligand>
</feature>
<feature type="binding site" description="in other chain" evidence="1">
    <location>
        <begin position="171"/>
        <end position="173"/>
    </location>
    <ligand>
        <name>substrate</name>
        <note>ligand shared between dimeric partners</note>
    </ligand>
</feature>
<feature type="binding site" description="in other chain" evidence="1">
    <location>
        <begin position="187"/>
        <end position="189"/>
    </location>
    <ligand>
        <name>ADP</name>
        <dbReference type="ChEBI" id="CHEBI:456216"/>
        <note>allosteric activator; ligand shared between dimeric partners</note>
    </ligand>
</feature>
<feature type="binding site" description="in other chain" evidence="1">
    <location>
        <position position="213"/>
    </location>
    <ligand>
        <name>ADP</name>
        <dbReference type="ChEBI" id="CHEBI:456216"/>
        <note>allosteric activator; ligand shared between dimeric partners</note>
    </ligand>
</feature>
<feature type="binding site" description="in other chain" evidence="1">
    <location>
        <begin position="215"/>
        <end position="217"/>
    </location>
    <ligand>
        <name>ADP</name>
        <dbReference type="ChEBI" id="CHEBI:456216"/>
        <note>allosteric activator; ligand shared between dimeric partners</note>
    </ligand>
</feature>
<feature type="binding site" description="in other chain" evidence="1">
    <location>
        <position position="224"/>
    </location>
    <ligand>
        <name>substrate</name>
        <note>ligand shared between dimeric partners</note>
    </ligand>
</feature>
<feature type="binding site" evidence="1">
    <location>
        <position position="245"/>
    </location>
    <ligand>
        <name>substrate</name>
        <note>ligand shared between dimeric partners</note>
    </ligand>
</feature>
<feature type="binding site" description="in other chain" evidence="1">
    <location>
        <begin position="251"/>
        <end position="254"/>
    </location>
    <ligand>
        <name>substrate</name>
        <note>ligand shared between dimeric partners</note>
    </ligand>
</feature>
<organism>
    <name type="scientific">Haemophilus influenzae (strain ATCC 51907 / DSM 11121 / KW20 / Rd)</name>
    <dbReference type="NCBI Taxonomy" id="71421"/>
    <lineage>
        <taxon>Bacteria</taxon>
        <taxon>Pseudomonadati</taxon>
        <taxon>Pseudomonadota</taxon>
        <taxon>Gammaproteobacteria</taxon>
        <taxon>Pasteurellales</taxon>
        <taxon>Pasteurellaceae</taxon>
        <taxon>Haemophilus</taxon>
    </lineage>
</organism>
<comment type="function">
    <text evidence="1">Catalyzes the phosphorylation of D-fructose 6-phosphate to fructose 1,6-bisphosphate by ATP, the first committing step of glycolysis.</text>
</comment>
<comment type="catalytic activity">
    <reaction evidence="1">
        <text>beta-D-fructose 6-phosphate + ATP = beta-D-fructose 1,6-bisphosphate + ADP + H(+)</text>
        <dbReference type="Rhea" id="RHEA:16109"/>
        <dbReference type="ChEBI" id="CHEBI:15378"/>
        <dbReference type="ChEBI" id="CHEBI:30616"/>
        <dbReference type="ChEBI" id="CHEBI:32966"/>
        <dbReference type="ChEBI" id="CHEBI:57634"/>
        <dbReference type="ChEBI" id="CHEBI:456216"/>
        <dbReference type="EC" id="2.7.1.11"/>
    </reaction>
</comment>
<comment type="cofactor">
    <cofactor evidence="1">
        <name>Mg(2+)</name>
        <dbReference type="ChEBI" id="CHEBI:18420"/>
    </cofactor>
</comment>
<comment type="activity regulation">
    <text evidence="1">Allosterically activated by ADP and other diphosphonucleosides, and allosterically inhibited by phosphoenolpyruvate.</text>
</comment>
<comment type="pathway">
    <text evidence="1">Carbohydrate degradation; glycolysis; D-glyceraldehyde 3-phosphate and glycerone phosphate from D-glucose: step 3/4.</text>
</comment>
<comment type="subunit">
    <text evidence="1">Homotetramer.</text>
</comment>
<comment type="subcellular location">
    <subcellularLocation>
        <location evidence="1">Cytoplasm</location>
    </subcellularLocation>
</comment>
<comment type="similarity">
    <text evidence="1">Belongs to the phosphofructokinase type A (PFKA) family. ATP-dependent PFK group I subfamily. Prokaryotic clade 'B1' sub-subfamily.</text>
</comment>
<dbReference type="EC" id="2.7.1.11" evidence="1"/>
<dbReference type="EMBL" id="L42023">
    <property type="protein sequence ID" value="AAC22644.1"/>
    <property type="molecule type" value="Genomic_DNA"/>
</dbReference>
<dbReference type="EMBL" id="U18657">
    <property type="protein sequence ID" value="AAA70114.1"/>
    <property type="molecule type" value="Genomic_DNA"/>
</dbReference>
<dbReference type="PIR" id="C64106">
    <property type="entry name" value="C64106"/>
</dbReference>
<dbReference type="RefSeq" id="NP_439145.1">
    <property type="nucleotide sequence ID" value="NC_000907.1"/>
</dbReference>
<dbReference type="SMR" id="P43863"/>
<dbReference type="STRING" id="71421.HI_0982"/>
<dbReference type="EnsemblBacteria" id="AAC22644">
    <property type="protein sequence ID" value="AAC22644"/>
    <property type="gene ID" value="HI_0982"/>
</dbReference>
<dbReference type="KEGG" id="hin:HI_0982"/>
<dbReference type="PATRIC" id="fig|71421.8.peg.1025"/>
<dbReference type="eggNOG" id="COG0205">
    <property type="taxonomic scope" value="Bacteria"/>
</dbReference>
<dbReference type="HOGENOM" id="CLU_020655_0_1_6"/>
<dbReference type="OrthoDB" id="9802503at2"/>
<dbReference type="PhylomeDB" id="P43863"/>
<dbReference type="BioCyc" id="HINF71421:G1GJ1-1024-MONOMER"/>
<dbReference type="UniPathway" id="UPA00109">
    <property type="reaction ID" value="UER00182"/>
</dbReference>
<dbReference type="Proteomes" id="UP000000579">
    <property type="component" value="Chromosome"/>
</dbReference>
<dbReference type="GO" id="GO:0005945">
    <property type="term" value="C:6-phosphofructokinase complex"/>
    <property type="evidence" value="ECO:0000318"/>
    <property type="project" value="GO_Central"/>
</dbReference>
<dbReference type="GO" id="GO:0003872">
    <property type="term" value="F:6-phosphofructokinase activity"/>
    <property type="evidence" value="ECO:0000318"/>
    <property type="project" value="GO_Central"/>
</dbReference>
<dbReference type="GO" id="GO:0005524">
    <property type="term" value="F:ATP binding"/>
    <property type="evidence" value="ECO:0007669"/>
    <property type="project" value="UniProtKB-KW"/>
</dbReference>
<dbReference type="GO" id="GO:0070095">
    <property type="term" value="F:fructose-6-phosphate binding"/>
    <property type="evidence" value="ECO:0000318"/>
    <property type="project" value="GO_Central"/>
</dbReference>
<dbReference type="GO" id="GO:0046872">
    <property type="term" value="F:metal ion binding"/>
    <property type="evidence" value="ECO:0007669"/>
    <property type="project" value="UniProtKB-KW"/>
</dbReference>
<dbReference type="GO" id="GO:0061621">
    <property type="term" value="P:canonical glycolysis"/>
    <property type="evidence" value="ECO:0000318"/>
    <property type="project" value="GO_Central"/>
</dbReference>
<dbReference type="GO" id="GO:0030388">
    <property type="term" value="P:fructose 1,6-bisphosphate metabolic process"/>
    <property type="evidence" value="ECO:0000318"/>
    <property type="project" value="GO_Central"/>
</dbReference>
<dbReference type="GO" id="GO:0006002">
    <property type="term" value="P:fructose 6-phosphate metabolic process"/>
    <property type="evidence" value="ECO:0000318"/>
    <property type="project" value="GO_Central"/>
</dbReference>
<dbReference type="CDD" id="cd00763">
    <property type="entry name" value="Bacterial_PFK"/>
    <property type="match status" value="1"/>
</dbReference>
<dbReference type="FunFam" id="3.40.50.450:FF:000001">
    <property type="entry name" value="ATP-dependent 6-phosphofructokinase"/>
    <property type="match status" value="1"/>
</dbReference>
<dbReference type="FunFam" id="3.40.50.460:FF:000002">
    <property type="entry name" value="ATP-dependent 6-phosphofructokinase"/>
    <property type="match status" value="1"/>
</dbReference>
<dbReference type="Gene3D" id="3.40.50.450">
    <property type="match status" value="1"/>
</dbReference>
<dbReference type="Gene3D" id="3.40.50.460">
    <property type="entry name" value="Phosphofructokinase domain"/>
    <property type="match status" value="1"/>
</dbReference>
<dbReference type="HAMAP" id="MF_00339">
    <property type="entry name" value="Phosphofructokinase_I_B1"/>
    <property type="match status" value="1"/>
</dbReference>
<dbReference type="InterPro" id="IPR022953">
    <property type="entry name" value="ATP_PFK"/>
</dbReference>
<dbReference type="InterPro" id="IPR012003">
    <property type="entry name" value="ATP_PFK_prok-type"/>
</dbReference>
<dbReference type="InterPro" id="IPR012828">
    <property type="entry name" value="PFKA_ATP_prok"/>
</dbReference>
<dbReference type="InterPro" id="IPR015912">
    <property type="entry name" value="Phosphofructokinase_CS"/>
</dbReference>
<dbReference type="InterPro" id="IPR000023">
    <property type="entry name" value="Phosphofructokinase_dom"/>
</dbReference>
<dbReference type="InterPro" id="IPR035966">
    <property type="entry name" value="PKF_sf"/>
</dbReference>
<dbReference type="NCBIfam" id="TIGR02482">
    <property type="entry name" value="PFKA_ATP"/>
    <property type="match status" value="1"/>
</dbReference>
<dbReference type="NCBIfam" id="NF002872">
    <property type="entry name" value="PRK03202.1"/>
    <property type="match status" value="1"/>
</dbReference>
<dbReference type="PANTHER" id="PTHR13697:SF4">
    <property type="entry name" value="ATP-DEPENDENT 6-PHOSPHOFRUCTOKINASE"/>
    <property type="match status" value="1"/>
</dbReference>
<dbReference type="PANTHER" id="PTHR13697">
    <property type="entry name" value="PHOSPHOFRUCTOKINASE"/>
    <property type="match status" value="1"/>
</dbReference>
<dbReference type="Pfam" id="PF00365">
    <property type="entry name" value="PFK"/>
    <property type="match status" value="1"/>
</dbReference>
<dbReference type="PIRSF" id="PIRSF000532">
    <property type="entry name" value="ATP_PFK_prok"/>
    <property type="match status" value="1"/>
</dbReference>
<dbReference type="PRINTS" id="PR00476">
    <property type="entry name" value="PHFRCTKINASE"/>
</dbReference>
<dbReference type="SUPFAM" id="SSF53784">
    <property type="entry name" value="Phosphofructokinase"/>
    <property type="match status" value="1"/>
</dbReference>
<dbReference type="PROSITE" id="PS00433">
    <property type="entry name" value="PHOSPHOFRUCTOKINASE"/>
    <property type="match status" value="1"/>
</dbReference>
<name>PFKA_HAEIN</name>
<reference key="1">
    <citation type="journal article" date="1995" name="Science">
        <title>Whole-genome random sequencing and assembly of Haemophilus influenzae Rd.</title>
        <authorList>
            <person name="Fleischmann R.D."/>
            <person name="Adams M.D."/>
            <person name="White O."/>
            <person name="Clayton R.A."/>
            <person name="Kirkness E.F."/>
            <person name="Kerlavage A.R."/>
            <person name="Bult C.J."/>
            <person name="Tomb J.-F."/>
            <person name="Dougherty B.A."/>
            <person name="Merrick J.M."/>
            <person name="McKenney K."/>
            <person name="Sutton G.G."/>
            <person name="FitzHugh W."/>
            <person name="Fields C.A."/>
            <person name="Gocayne J.D."/>
            <person name="Scott J.D."/>
            <person name="Shirley R."/>
            <person name="Liu L.-I."/>
            <person name="Glodek A."/>
            <person name="Kelley J.M."/>
            <person name="Weidman J.F."/>
            <person name="Phillips C.A."/>
            <person name="Spriggs T."/>
            <person name="Hedblom E."/>
            <person name="Cotton M.D."/>
            <person name="Utterback T.R."/>
            <person name="Hanna M.C."/>
            <person name="Nguyen D.T."/>
            <person name="Saudek D.M."/>
            <person name="Brandon R.C."/>
            <person name="Fine L.D."/>
            <person name="Fritchman J.L."/>
            <person name="Fuhrmann J.L."/>
            <person name="Geoghagen N.S.M."/>
            <person name="Gnehm C.L."/>
            <person name="McDonald L.A."/>
            <person name="Small K.V."/>
            <person name="Fraser C.M."/>
            <person name="Smith H.O."/>
            <person name="Venter J.C."/>
        </authorList>
    </citation>
    <scope>NUCLEOTIDE SEQUENCE [LARGE SCALE GENOMIC DNA]</scope>
    <source>
        <strain>ATCC 51907 / DSM 11121 / KW20 / Rd</strain>
    </source>
</reference>
<reference key="2">
    <citation type="journal article" date="1995" name="J. Bacteriol.">
        <title>DNA sequence and characterization of Haemophilus influenzae dprA+, a gene required for chromosomal but not plasmid DNA transformation.</title>
        <authorList>
            <person name="Karudapuram S."/>
            <person name="Zhao X."/>
            <person name="Barcak G.J."/>
        </authorList>
    </citation>
    <scope>NUCLEOTIDE SEQUENCE [GENOMIC DNA] OF 1-148</scope>
    <source>
        <strain>ATCC 51907 / DSM 11121 / KW20 / Rd</strain>
    </source>
</reference>
<proteinExistence type="inferred from homology"/>
<gene>
    <name evidence="1" type="primary">pfkA</name>
    <name type="ordered locus">HI_0982</name>
</gene>
<protein>
    <recommendedName>
        <fullName evidence="1">ATP-dependent 6-phosphofructokinase</fullName>
        <shortName evidence="1">ATP-PFK</shortName>
        <shortName evidence="1">Phosphofructokinase</shortName>
        <ecNumber evidence="1">2.7.1.11</ecNumber>
    </recommendedName>
    <alternativeName>
        <fullName evidence="1">Phosphohexokinase</fullName>
    </alternativeName>
</protein>
<evidence type="ECO:0000255" key="1">
    <source>
        <dbReference type="HAMAP-Rule" id="MF_00339"/>
    </source>
</evidence>